<gene>
    <name evidence="19" type="primary">ELP4</name>
    <name type="synonym">HAP1</name>
    <name evidence="18" type="synonym">TOT7</name>
    <name type="ordered locus">YPL101W</name>
</gene>
<organism>
    <name type="scientific">Saccharomyces cerevisiae (strain ATCC 204508 / S288c)</name>
    <name type="common">Baker's yeast</name>
    <dbReference type="NCBI Taxonomy" id="559292"/>
    <lineage>
        <taxon>Eukaryota</taxon>
        <taxon>Fungi</taxon>
        <taxon>Dikarya</taxon>
        <taxon>Ascomycota</taxon>
        <taxon>Saccharomycotina</taxon>
        <taxon>Saccharomycetes</taxon>
        <taxon>Saccharomycetales</taxon>
        <taxon>Saccharomycetaceae</taxon>
        <taxon>Saccharomyces</taxon>
    </lineage>
</organism>
<accession>Q02884</accession>
<accession>D6W3R5</accession>
<proteinExistence type="evidence at protein level"/>
<comment type="function">
    <text evidence="2 6 8 10 20">Component of the elongator complex, a multiprotein complex which is required for multiple tRNA modifications, including mcm5U (5-methoxycarbonylmethyl uridine), mcm5s2U (5-methoxycarbonylmethyl-2-thiouridine), and ncm5U (5-carbamoylmethyl uridine) (PubMed:15769872, PubMed:18755837). The elongator complex catalyzes formation of carboxymethyluridine in the wobble base at position 34 in tRNAs (PubMed:29332244). It functions as a gamma-toxin target (TOT); disruption of the complex confers resistance to Kluyveromyces lactis toxin zymocin (pGKL1 killer toxin) (PubMed:11296232). May also be involved in sensitivity to Pichia inositovora toxin (PubMed:13680368).</text>
</comment>
<comment type="pathway">
    <text evidence="8 10">tRNA modification; 5-methoxycarbonylmethyl-2-thiouridine-tRNA biosynthesis.</text>
</comment>
<comment type="subunit">
    <text evidence="3 4 5 9 11 12 15 16 17">Component of the elongator complex which consists of ELP1/IKI3, ELP2, ELP3, ELP4, ELP5/IKI1 and ELP6 (PubMed:11390369, PubMed:11435442, PubMed:11689709, PubMed:27872205, PubMed:27974378). The elongator complex is composed of two copies of the Elp123 subcomplex (composed of ELP1/IKI3, ELP2 and ELP3) and two copies of the Elp456 subcomplex (composed of ELP4, ELP5/IKI1 and ELP6) (PubMed:27872205, PubMed:27974378). The Elp123 subcomplex forms a two-lobed scaffold, which binds the Elp456 subcomplex asymmetrically (PubMed:27872205, PubMed:27974378). In each lobe, ELP2 is tightly sandwiched between ELP1/IKI3 and ELP3 (PubMed:31309145). The Elp123 subcomplex binds tRNA through ELP1/IKI3 and ELP3 and can bind 2 tRNAs simultaneously (PubMed:31309145). tRNA-binding by the Elp123 subcomplex induces conformational rearrangements which precisely position the targeted anticodon base in the active site (PubMed:31309145). The Elp456 subcomplex binds tRNA and has ATPase activity (PubMed:22343726, PubMed:22556426). ELP4 interacts with KTI12 (PubMed:15772087).</text>
</comment>
<comment type="interaction">
    <interactant intactId="EBI-35277">
        <id>Q02884</id>
    </interactant>
    <interactant intactId="EBI-23459">
        <id>P42935</id>
        <label>ELP2</label>
    </interactant>
    <organismsDiffer>false</organismsDiffer>
    <experiments>7</experiments>
</comment>
<comment type="interaction">
    <interactant intactId="EBI-35277">
        <id>Q02884</id>
    </interactant>
    <interactant intactId="EBI-35277">
        <id>Q02884</id>
        <label>ELP4</label>
    </interactant>
    <organismsDiffer>false</organismsDiffer>
    <experiments>2</experiments>
</comment>
<comment type="interaction">
    <interactant intactId="EBI-35277">
        <id>Q02884</id>
    </interactant>
    <interactant intactId="EBI-27653">
        <id>Q04868</id>
        <label>ELP6</label>
    </interactant>
    <organismsDiffer>false</organismsDiffer>
    <experiments>15</experiments>
</comment>
<comment type="interaction">
    <interactant intactId="EBI-35277">
        <id>Q02884</id>
    </interactant>
    <interactant intactId="EBI-9061">
        <id>P38874</id>
        <label>IKI1</label>
    </interactant>
    <organismsDiffer>false</organismsDiffer>
    <experiments>14</experiments>
</comment>
<comment type="interaction">
    <interactant intactId="EBI-35277">
        <id>Q02884</id>
    </interactant>
    <interactant intactId="EBI-9068">
        <id>Q06706</id>
        <label>IKI3</label>
    </interactant>
    <organismsDiffer>false</organismsDiffer>
    <experiments>13</experiments>
</comment>
<comment type="subcellular location">
    <subcellularLocation>
        <location>Cytoplasm</location>
    </subcellularLocation>
    <subcellularLocation>
        <location>Nucleus</location>
    </subcellularLocation>
</comment>
<comment type="miscellaneous">
    <text evidence="7">Present with 358 molecules/cell in log phase SD medium.</text>
</comment>
<comment type="similarity">
    <text evidence="21">Belongs to the ELP4 family.</text>
</comment>
<comment type="caution">
    <text evidence="22 23 24 25 26">The elongator complex was originally thought to play a role in transcription elongation. However, it is no longer thought to play a direct role in this process and its primary function is thought to be in tRNA modification.</text>
</comment>
<feature type="chain" id="PRO_0000235812" description="Elongator complex protein 4">
    <location>
        <begin position="1"/>
        <end position="456"/>
    </location>
</feature>
<feature type="region of interest" description="Disordered" evidence="1">
    <location>
        <begin position="1"/>
        <end position="91"/>
    </location>
</feature>
<feature type="region of interest" description="Disordered" evidence="1">
    <location>
        <begin position="424"/>
        <end position="444"/>
    </location>
</feature>
<feature type="compositionally biased region" description="Basic and acidic residues" evidence="1">
    <location>
        <begin position="1"/>
        <end position="11"/>
    </location>
</feature>
<feature type="compositionally biased region" description="Low complexity" evidence="1">
    <location>
        <begin position="18"/>
        <end position="27"/>
    </location>
</feature>
<feature type="compositionally biased region" description="Basic and acidic residues" evidence="1">
    <location>
        <begin position="57"/>
        <end position="66"/>
    </location>
</feature>
<feature type="compositionally biased region" description="Low complexity" evidence="1">
    <location>
        <begin position="77"/>
        <end position="90"/>
    </location>
</feature>
<feature type="compositionally biased region" description="Basic and acidic residues" evidence="1">
    <location>
        <begin position="432"/>
        <end position="442"/>
    </location>
</feature>
<feature type="modified residue" description="Omega-N-methylarginine" evidence="14">
    <location>
        <position position="13"/>
    </location>
</feature>
<feature type="modified residue" description="Phosphoserine" evidence="13 29">
    <location>
        <position position="222"/>
    </location>
</feature>
<feature type="strand" evidence="30">
    <location>
        <begin position="75"/>
        <end position="77"/>
    </location>
</feature>
<feature type="turn" evidence="30">
    <location>
        <begin position="79"/>
        <end position="81"/>
    </location>
</feature>
<feature type="strand" evidence="30">
    <location>
        <begin position="84"/>
        <end position="86"/>
    </location>
</feature>
<feature type="helix" evidence="30">
    <location>
        <begin position="91"/>
        <end position="96"/>
    </location>
</feature>
<feature type="strand" evidence="30">
    <location>
        <begin position="99"/>
        <end position="103"/>
    </location>
</feature>
<feature type="strand" evidence="30">
    <location>
        <begin position="107"/>
        <end position="112"/>
    </location>
</feature>
<feature type="helix" evidence="30">
    <location>
        <begin position="119"/>
        <end position="135"/>
    </location>
</feature>
<feature type="strand" evidence="30">
    <location>
        <begin position="149"/>
        <end position="154"/>
    </location>
</feature>
<feature type="helix" evidence="30">
    <location>
        <begin position="158"/>
        <end position="163"/>
    </location>
</feature>
<feature type="strand" evidence="31">
    <location>
        <begin position="165"/>
        <end position="167"/>
    </location>
</feature>
<feature type="strand" evidence="31">
    <location>
        <begin position="241"/>
        <end position="246"/>
    </location>
</feature>
<feature type="turn" evidence="30">
    <location>
        <begin position="253"/>
        <end position="255"/>
    </location>
</feature>
<feature type="strand" evidence="30">
    <location>
        <begin position="256"/>
        <end position="259"/>
    </location>
</feature>
<feature type="strand" evidence="31">
    <location>
        <begin position="261"/>
        <end position="263"/>
    </location>
</feature>
<feature type="helix" evidence="30">
    <location>
        <begin position="265"/>
        <end position="278"/>
    </location>
</feature>
<feature type="turn" evidence="30">
    <location>
        <begin position="279"/>
        <end position="281"/>
    </location>
</feature>
<feature type="strand" evidence="30">
    <location>
        <begin position="282"/>
        <end position="288"/>
    </location>
</feature>
<feature type="turn" evidence="30">
    <location>
        <begin position="289"/>
        <end position="292"/>
    </location>
</feature>
<feature type="turn" evidence="30">
    <location>
        <begin position="294"/>
        <end position="296"/>
    </location>
</feature>
<feature type="helix" evidence="30">
    <location>
        <begin position="299"/>
        <end position="302"/>
    </location>
</feature>
<feature type="helix" evidence="30">
    <location>
        <begin position="304"/>
        <end position="320"/>
    </location>
</feature>
<feature type="turn" evidence="30">
    <location>
        <begin position="321"/>
        <end position="324"/>
    </location>
</feature>
<feature type="strand" evidence="30">
    <location>
        <begin position="325"/>
        <end position="332"/>
    </location>
</feature>
<feature type="helix" evidence="31">
    <location>
        <begin position="333"/>
        <end position="335"/>
    </location>
</feature>
<feature type="helix" evidence="30">
    <location>
        <begin position="338"/>
        <end position="347"/>
    </location>
</feature>
<feature type="strand" evidence="30">
    <location>
        <begin position="349"/>
        <end position="356"/>
    </location>
</feature>
<feature type="helix" evidence="30">
    <location>
        <begin position="359"/>
        <end position="368"/>
    </location>
</feature>
<feature type="turn" evidence="30">
    <location>
        <begin position="369"/>
        <end position="371"/>
    </location>
</feature>
<feature type="helix" evidence="30">
    <location>
        <begin position="373"/>
        <end position="375"/>
    </location>
</feature>
<feature type="strand" evidence="30">
    <location>
        <begin position="379"/>
        <end position="385"/>
    </location>
</feature>
<feature type="helix" evidence="30">
    <location>
        <begin position="389"/>
        <end position="392"/>
    </location>
</feature>
<feature type="strand" evidence="30">
    <location>
        <begin position="398"/>
        <end position="406"/>
    </location>
</feature>
<feature type="strand" evidence="30">
    <location>
        <begin position="411"/>
        <end position="415"/>
    </location>
</feature>
<name>ELP4_YEAST</name>
<dbReference type="EMBL" id="U43281">
    <property type="protein sequence ID" value="AAB68198.1"/>
    <property type="molecule type" value="Genomic_DNA"/>
</dbReference>
<dbReference type="EMBL" id="BK006949">
    <property type="protein sequence ID" value="DAA11331.1"/>
    <property type="molecule type" value="Genomic_DNA"/>
</dbReference>
<dbReference type="PIR" id="S61965">
    <property type="entry name" value="S61965"/>
</dbReference>
<dbReference type="RefSeq" id="NP_015224.1">
    <property type="nucleotide sequence ID" value="NM_001183915.1"/>
</dbReference>
<dbReference type="PDB" id="4A8J">
    <property type="method" value="X-ray"/>
    <property type="resolution" value="2.10 A"/>
    <property type="chains" value="A/D=66-426"/>
</dbReference>
<dbReference type="PDB" id="4EJS">
    <property type="method" value="X-ray"/>
    <property type="resolution" value="2.61 A"/>
    <property type="chains" value="A=67-438"/>
</dbReference>
<dbReference type="PDB" id="8ASV">
    <property type="method" value="EM"/>
    <property type="resolution" value="4.35 A"/>
    <property type="chains" value="G/J=1-456"/>
</dbReference>
<dbReference type="PDB" id="8AT6">
    <property type="method" value="EM"/>
    <property type="resolution" value="3.70 A"/>
    <property type="chains" value="A/D=1-456"/>
</dbReference>
<dbReference type="PDBsum" id="4A8J"/>
<dbReference type="PDBsum" id="4EJS"/>
<dbReference type="PDBsum" id="8ASV"/>
<dbReference type="PDBsum" id="8AT6"/>
<dbReference type="EMDB" id="EMD-15622"/>
<dbReference type="EMDB" id="EMD-15635"/>
<dbReference type="SMR" id="Q02884"/>
<dbReference type="BioGRID" id="36079">
    <property type="interactions" value="444"/>
</dbReference>
<dbReference type="ComplexPortal" id="CPX-779">
    <property type="entry name" value="Elongator holoenzyme complex"/>
</dbReference>
<dbReference type="DIP" id="DIP-6718N"/>
<dbReference type="FunCoup" id="Q02884">
    <property type="interactions" value="1118"/>
</dbReference>
<dbReference type="IntAct" id="Q02884">
    <property type="interactions" value="12"/>
</dbReference>
<dbReference type="MINT" id="Q02884"/>
<dbReference type="STRING" id="4932.YPL101W"/>
<dbReference type="iPTMnet" id="Q02884"/>
<dbReference type="PaxDb" id="4932-YPL101W"/>
<dbReference type="PeptideAtlas" id="Q02884"/>
<dbReference type="DNASU" id="856002"/>
<dbReference type="EnsemblFungi" id="YPL101W_mRNA">
    <property type="protein sequence ID" value="YPL101W"/>
    <property type="gene ID" value="YPL101W"/>
</dbReference>
<dbReference type="GeneID" id="856002"/>
<dbReference type="KEGG" id="sce:YPL101W"/>
<dbReference type="AGR" id="SGD:S000006022"/>
<dbReference type="SGD" id="S000006022">
    <property type="gene designation" value="ELP4"/>
</dbReference>
<dbReference type="VEuPathDB" id="FungiDB:YPL101W"/>
<dbReference type="eggNOG" id="KOG3949">
    <property type="taxonomic scope" value="Eukaryota"/>
</dbReference>
<dbReference type="GeneTree" id="ENSGT00390000001443"/>
<dbReference type="HOGENOM" id="CLU_040685_0_0_1"/>
<dbReference type="InParanoid" id="Q02884"/>
<dbReference type="OMA" id="QGMLKVH"/>
<dbReference type="OrthoDB" id="289162at2759"/>
<dbReference type="BioCyc" id="MetaCyc:G3O-34004-MONOMER"/>
<dbReference type="BioCyc" id="YEAST:G3O-34004-MONOMER"/>
<dbReference type="UniPathway" id="UPA00988"/>
<dbReference type="BioGRID-ORCS" id="856002">
    <property type="hits" value="6 hits in 10 CRISPR screens"/>
</dbReference>
<dbReference type="CD-CODE" id="E03F929F">
    <property type="entry name" value="Stress granule"/>
</dbReference>
<dbReference type="ChiTaRS" id="HAP1">
    <property type="organism name" value="yeast"/>
</dbReference>
<dbReference type="EvolutionaryTrace" id="Q02884"/>
<dbReference type="PRO" id="PR:Q02884"/>
<dbReference type="Proteomes" id="UP000002311">
    <property type="component" value="Chromosome XVI"/>
</dbReference>
<dbReference type="RNAct" id="Q02884">
    <property type="molecule type" value="protein"/>
</dbReference>
<dbReference type="GO" id="GO:0005737">
    <property type="term" value="C:cytoplasm"/>
    <property type="evidence" value="ECO:0007005"/>
    <property type="project" value="SGD"/>
</dbReference>
<dbReference type="GO" id="GO:0033588">
    <property type="term" value="C:elongator holoenzyme complex"/>
    <property type="evidence" value="ECO:0000314"/>
    <property type="project" value="UniProtKB"/>
</dbReference>
<dbReference type="GO" id="GO:0005654">
    <property type="term" value="C:nucleoplasm"/>
    <property type="evidence" value="ECO:0000304"/>
    <property type="project" value="Reactome"/>
</dbReference>
<dbReference type="GO" id="GO:0008023">
    <property type="term" value="C:transcription elongation factor complex"/>
    <property type="evidence" value="ECO:0000318"/>
    <property type="project" value="GO_Central"/>
</dbReference>
<dbReference type="GO" id="GO:0042802">
    <property type="term" value="F:identical protein binding"/>
    <property type="evidence" value="ECO:0000353"/>
    <property type="project" value="IntAct"/>
</dbReference>
<dbReference type="GO" id="GO:0006357">
    <property type="term" value="P:regulation of transcription by RNA polymerase II"/>
    <property type="evidence" value="ECO:0000315"/>
    <property type="project" value="SGD"/>
</dbReference>
<dbReference type="GO" id="GO:0006417">
    <property type="term" value="P:regulation of translation"/>
    <property type="evidence" value="ECO:0000303"/>
    <property type="project" value="ComplexPortal"/>
</dbReference>
<dbReference type="GO" id="GO:0002098">
    <property type="term" value="P:tRNA wobble uridine modification"/>
    <property type="evidence" value="ECO:0000315"/>
    <property type="project" value="SGD"/>
</dbReference>
<dbReference type="CDD" id="cd19494">
    <property type="entry name" value="Elp4"/>
    <property type="match status" value="1"/>
</dbReference>
<dbReference type="Gene3D" id="3.40.50.300">
    <property type="entry name" value="P-loop containing nucleotide triphosphate hydrolases"/>
    <property type="match status" value="1"/>
</dbReference>
<dbReference type="InterPro" id="IPR008728">
    <property type="entry name" value="Elongator_complex_protein_4"/>
</dbReference>
<dbReference type="InterPro" id="IPR027417">
    <property type="entry name" value="P-loop_NTPase"/>
</dbReference>
<dbReference type="PANTHER" id="PTHR12896:SF1">
    <property type="entry name" value="ELONGATOR COMPLEX PROTEIN 4"/>
    <property type="match status" value="1"/>
</dbReference>
<dbReference type="PANTHER" id="PTHR12896">
    <property type="entry name" value="PAX6 NEIGHBOR PROTEIN PAXNEB"/>
    <property type="match status" value="1"/>
</dbReference>
<dbReference type="Pfam" id="PF05625">
    <property type="entry name" value="PAXNEB"/>
    <property type="match status" value="1"/>
</dbReference>
<reference key="1">
    <citation type="journal article" date="1997" name="Nature">
        <title>The nucleotide sequence of Saccharomyces cerevisiae chromosome XVI.</title>
        <authorList>
            <person name="Bussey H."/>
            <person name="Storms R.K."/>
            <person name="Ahmed A."/>
            <person name="Albermann K."/>
            <person name="Allen E."/>
            <person name="Ansorge W."/>
            <person name="Araujo R."/>
            <person name="Aparicio A."/>
            <person name="Barrell B.G."/>
            <person name="Badcock K."/>
            <person name="Benes V."/>
            <person name="Botstein D."/>
            <person name="Bowman S."/>
            <person name="Brueckner M."/>
            <person name="Carpenter J."/>
            <person name="Cherry J.M."/>
            <person name="Chung E."/>
            <person name="Churcher C.M."/>
            <person name="Coster F."/>
            <person name="Davis K."/>
            <person name="Davis R.W."/>
            <person name="Dietrich F.S."/>
            <person name="Delius H."/>
            <person name="DiPaolo T."/>
            <person name="Dubois E."/>
            <person name="Duesterhoeft A."/>
            <person name="Duncan M."/>
            <person name="Floeth M."/>
            <person name="Fortin N."/>
            <person name="Friesen J.D."/>
            <person name="Fritz C."/>
            <person name="Goffeau A."/>
            <person name="Hall J."/>
            <person name="Hebling U."/>
            <person name="Heumann K."/>
            <person name="Hilbert H."/>
            <person name="Hillier L.W."/>
            <person name="Hunicke-Smith S."/>
            <person name="Hyman R.W."/>
            <person name="Johnston M."/>
            <person name="Kalman S."/>
            <person name="Kleine K."/>
            <person name="Komp C."/>
            <person name="Kurdi O."/>
            <person name="Lashkari D."/>
            <person name="Lew H."/>
            <person name="Lin A."/>
            <person name="Lin D."/>
            <person name="Louis E.J."/>
            <person name="Marathe R."/>
            <person name="Messenguy F."/>
            <person name="Mewes H.-W."/>
            <person name="Mirtipati S."/>
            <person name="Moestl D."/>
            <person name="Mueller-Auer S."/>
            <person name="Namath A."/>
            <person name="Nentwich U."/>
            <person name="Oefner P."/>
            <person name="Pearson D."/>
            <person name="Petel F.X."/>
            <person name="Pohl T.M."/>
            <person name="Purnelle B."/>
            <person name="Rajandream M.A."/>
            <person name="Rechmann S."/>
            <person name="Rieger M."/>
            <person name="Riles L."/>
            <person name="Roberts D."/>
            <person name="Schaefer M."/>
            <person name="Scharfe M."/>
            <person name="Scherens B."/>
            <person name="Schramm S."/>
            <person name="Schroeder M."/>
            <person name="Sdicu A.-M."/>
            <person name="Tettelin H."/>
            <person name="Urrestarazu L.A."/>
            <person name="Ushinsky S."/>
            <person name="Vierendeels F."/>
            <person name="Vissers S."/>
            <person name="Voss H."/>
            <person name="Walsh S.V."/>
            <person name="Wambutt R."/>
            <person name="Wang Y."/>
            <person name="Wedler E."/>
            <person name="Wedler H."/>
            <person name="Winnett E."/>
            <person name="Zhong W.-W."/>
            <person name="Zollner A."/>
            <person name="Vo D.H."/>
            <person name="Hani J."/>
        </authorList>
    </citation>
    <scope>NUCLEOTIDE SEQUENCE [LARGE SCALE GENOMIC DNA]</scope>
    <source>
        <strain>ATCC 204508 / S288c</strain>
    </source>
</reference>
<reference key="2">
    <citation type="journal article" date="2014" name="G3 (Bethesda)">
        <title>The reference genome sequence of Saccharomyces cerevisiae: Then and now.</title>
        <authorList>
            <person name="Engel S.R."/>
            <person name="Dietrich F.S."/>
            <person name="Fisk D.G."/>
            <person name="Binkley G."/>
            <person name="Balakrishnan R."/>
            <person name="Costanzo M.C."/>
            <person name="Dwight S.S."/>
            <person name="Hitz B.C."/>
            <person name="Karra K."/>
            <person name="Nash R.S."/>
            <person name="Weng S."/>
            <person name="Wong E.D."/>
            <person name="Lloyd P."/>
            <person name="Skrzypek M.S."/>
            <person name="Miyasato S.R."/>
            <person name="Simison M."/>
            <person name="Cherry J.M."/>
        </authorList>
    </citation>
    <scope>GENOME REANNOTATION</scope>
    <source>
        <strain>ATCC 204508 / S288c</strain>
    </source>
</reference>
<reference key="3">
    <citation type="journal article" date="1999" name="Mol. Cell">
        <title>Elongator, a multisubunit component of a novel RNA polymerase II holoenzyme for transcriptional elongation.</title>
        <authorList>
            <person name="Otero G."/>
            <person name="Fellows J."/>
            <person name="Li Y."/>
            <person name="de Bizemont T."/>
            <person name="Dirac A.M."/>
            <person name="Gustafsson C.M."/>
            <person name="Erdjument-Bromage H."/>
            <person name="Tempst P."/>
            <person name="Svejstrup J.Q."/>
        </authorList>
    </citation>
    <scope>SUBCELLULAR LOCATION</scope>
</reference>
<reference key="4">
    <citation type="journal article" date="2001" name="EMBO J.">
        <title>Saccharomyces cerevisiae Elongator mutations confer resistance to the Kluyveromyces lactis zymocin.</title>
        <authorList>
            <person name="Frohloff F."/>
            <person name="Fichtner L."/>
            <person name="Jablonowski D."/>
            <person name="Breunig K.D."/>
            <person name="Schaffrath R."/>
        </authorList>
    </citation>
    <scope>FUNCTION OF THE ELONGATOR COMPLEX IN ZYMOCIN SENSITIVITY</scope>
</reference>
<reference key="5">
    <citation type="journal article" date="2001" name="J. Biol. Chem.">
        <title>RNA polymerase II elongator holoenzyme is composed of two discrete subcomplexes.</title>
        <authorList>
            <person name="Winkler G.S."/>
            <person name="Petrakis T.G."/>
            <person name="Ethelberg S."/>
            <person name="Tokunaga M."/>
            <person name="Erdjument-Bromage H."/>
            <person name="Tempst P."/>
            <person name="Svejstrup J.Q."/>
        </authorList>
    </citation>
    <scope>IDENTIFICATION IN THE ELONGATOR COMPLEX</scope>
</reference>
<reference key="6">
    <citation type="journal article" date="2001" name="J. Biol. Chem.">
        <title>A multiprotein complex that interacts with RNA polymerase II elongator.</title>
        <authorList>
            <person name="Li Y."/>
            <person name="Takagi Y."/>
            <person name="Jiang Y."/>
            <person name="Tokunaga M."/>
            <person name="Erdjument-Bromage H."/>
            <person name="Tempst P."/>
            <person name="Kornberg R.D."/>
        </authorList>
    </citation>
    <scope>IDENTIFICATION IN THE ELONGATOR COMPLEX</scope>
    <scope>IDENTIFICATION BY MASS SPECTROMETRY</scope>
</reference>
<reference key="7">
    <citation type="journal article" date="2001" name="Mol. Cell. Biol.">
        <title>Characterization of a six-subunit holo-elongator complex required for the regulated expression of a group of genes in Saccharomyces cerevisiae.</title>
        <authorList>
            <person name="Krogan N.J."/>
            <person name="Greenblatt J.F."/>
        </authorList>
    </citation>
    <scope>IDENTIFICATION IN THE ELONGATOR COMPLEX</scope>
</reference>
<reference key="8">
    <citation type="journal article" date="2002" name="Proc. Natl. Acad. Sci. U.S.A.">
        <title>Elongator is a histone H3 and H4 acetyltransferase important for normal histone acetylation levels in vivo.</title>
        <authorList>
            <person name="Winkler G.S."/>
            <person name="Kristjuhan A."/>
            <person name="Erdjument-Bromage H."/>
            <person name="Tempst P."/>
            <person name="Svejstrup J.Q."/>
        </authorList>
    </citation>
    <scope>DISPUTED FUNCTION IN HISTONE ACETYLATION</scope>
</reference>
<reference key="9">
    <citation type="journal article" date="2003" name="Mol. Genet. Genomics">
        <title>Structural and functional analysis of the killer element pPin1-3 from Pichia inositovora.</title>
        <authorList>
            <person name="Klassen R."/>
            <person name="Meinhardt F."/>
        </authorList>
    </citation>
    <scope>FUNCTION OF THE ELONGATOR COMPLEX IN PICHIA INOSITOVORA TOXIN SENSITIVITY</scope>
</reference>
<reference key="10">
    <citation type="journal article" date="2003" name="Nature">
        <title>Global analysis of protein expression in yeast.</title>
        <authorList>
            <person name="Ghaemmaghami S."/>
            <person name="Huh W.-K."/>
            <person name="Bower K."/>
            <person name="Howson R.W."/>
            <person name="Belle A."/>
            <person name="Dephoure N."/>
            <person name="O'Shea E.K."/>
            <person name="Weissman J.S."/>
        </authorList>
    </citation>
    <scope>LEVEL OF PROTEIN EXPRESSION [LARGE SCALE ANALYSIS]</scope>
</reference>
<reference key="11">
    <citation type="journal article" date="2004" name="J. Biol. Chem.">
        <title>Molecular architecture, structure-function relationship, and importance of the Elp3 subunit for the RNA binding of holo-elongator.</title>
        <authorList>
            <person name="Petrakis T.G."/>
            <person name="Wittschieben B.O."/>
            <person name="Svejstrup J.Q."/>
        </authorList>
    </citation>
    <scope>DISPUTED FUNCTION IN HISTONE ACETYLATION</scope>
</reference>
<reference key="12">
    <citation type="journal article" date="2005" name="J. Biol. Chem.">
        <title>Physical and functional interaction between Elongator and the chromatin-associated Kti12 protein.</title>
        <authorList>
            <person name="Petrakis T.G."/>
            <person name="Soegaard T.M.M."/>
            <person name="Erdjument-Bromage H."/>
            <person name="Tempst P."/>
            <person name="Svejstrup J.Q."/>
        </authorList>
    </citation>
    <scope>INTERACTION WITH KTI12</scope>
</reference>
<reference key="13">
    <citation type="journal article" date="2005" name="Mol. Cell">
        <title>Elp1p, the yeast homolog of the FD disease syndrome protein, negatively regulates exocytosis independently of transcriptional elongation.</title>
        <authorList>
            <person name="Rahl P.B."/>
            <person name="Chen C.Z."/>
            <person name="Collins R.N."/>
        </authorList>
    </citation>
    <scope>SUBCELLULAR LOCATION</scope>
</reference>
<reference key="14">
    <citation type="journal article" date="2005" name="RNA">
        <title>An early step in wobble uridine tRNA modification requires the Elongator complex.</title>
        <authorList>
            <person name="Huang B."/>
            <person name="Johansson M.J.O."/>
            <person name="Bystroem A.S."/>
        </authorList>
    </citation>
    <scope>FUNCTION IN TRNA MODIFICATION</scope>
</reference>
<reference key="15">
    <citation type="journal article" date="2007" name="J. Proteome Res.">
        <title>Large-scale phosphorylation analysis of alpha-factor-arrested Saccharomyces cerevisiae.</title>
        <authorList>
            <person name="Li X."/>
            <person name="Gerber S.A."/>
            <person name="Rudner A.D."/>
            <person name="Beausoleil S.A."/>
            <person name="Haas W."/>
            <person name="Villen J."/>
            <person name="Elias J.E."/>
            <person name="Gygi S.P."/>
        </authorList>
    </citation>
    <scope>PHOSPHORYLATION [LARGE SCALE ANALYSIS] AT SER-222</scope>
    <scope>IDENTIFICATION BY MASS SPECTROMETRY [LARGE SCALE ANALYSIS]</scope>
    <source>
        <strain>ADR376</strain>
    </source>
</reference>
<reference key="16">
    <citation type="journal article" date="2008" name="RNA">
        <title>A genome-wide screen identifies genes required for formation of the wobble nucleoside 5-methoxycarbonylmethyl-2-thiouridine in Saccharomyces cerevisiae.</title>
        <authorList>
            <person name="Huang B."/>
            <person name="Lu J."/>
            <person name="Bystroem A.S."/>
        </authorList>
    </citation>
    <scope>FUNCTION</scope>
</reference>
<reference key="17">
    <citation type="journal article" date="2015" name="PLoS Genet.">
        <title>Phosphorylation of Elp1 by Hrr25 is required for elongator-dependent tRNA modification in yeast.</title>
        <authorList>
            <person name="Abdel-Fattah W."/>
            <person name="Jablonowski D."/>
            <person name="Di Santo R."/>
            <person name="Thuering K.L."/>
            <person name="Scheidt V."/>
            <person name="Hammermeister A."/>
            <person name="Ten Have S."/>
            <person name="Helm M."/>
            <person name="Schaffrath R."/>
            <person name="Stark M.J."/>
        </authorList>
    </citation>
    <scope>PHOSPHORYLATION AT SER-222</scope>
</reference>
<reference key="18">
    <citation type="journal article" date="2015" name="Proteomics">
        <title>Expanding the yeast protein arginine methylome.</title>
        <authorList>
            <person name="Plank M."/>
            <person name="Fischer R."/>
            <person name="Geoghegan V."/>
            <person name="Charles P.D."/>
            <person name="Konietzny R."/>
            <person name="Acuto O."/>
            <person name="Pears C."/>
            <person name="Schofield C.J."/>
            <person name="Kessler B.M."/>
        </authorList>
    </citation>
    <scope>METHYLATION AT ARG-13</scope>
</reference>
<reference key="19">
    <citation type="journal article" date="2018" name="Cell. Mol. Life Sci.">
        <title>Structural insights into the function of Elongator.</title>
        <authorList>
            <person name="Dalwadi U."/>
            <person name="Yip C.K."/>
        </authorList>
    </citation>
    <scope>REVIEW</scope>
</reference>
<reference key="20">
    <citation type="journal article" date="2019" name="Sci. Adv.">
        <title>Molecular basis of tRNA recognition by the Elongator complex.</title>
        <authorList>
            <person name="Dauden M.I."/>
            <person name="Jaciuk M."/>
            <person name="Weis F."/>
            <person name="Lin T.Y."/>
            <person name="Kleindienst C."/>
            <person name="Abbassi N.E.H."/>
            <person name="Khatter H."/>
            <person name="Krutyholowa R."/>
            <person name="Breunig K.D."/>
            <person name="Kosinski J."/>
            <person name="Mueller C.W."/>
            <person name="Glatt S."/>
        </authorList>
    </citation>
    <scope>SUBUNIT</scope>
</reference>
<reference evidence="28" key="21">
    <citation type="journal article" date="2012" name="J. Biol. Chem.">
        <title>Crystal structure of elongator subcomplex Elp4-6.</title>
        <authorList>
            <person name="Lin Z."/>
            <person name="Zhao W."/>
            <person name="Diao W."/>
            <person name="Xie X."/>
            <person name="Wang Z."/>
            <person name="Zhang J."/>
            <person name="Shen Y."/>
            <person name="Long J."/>
        </authorList>
    </citation>
    <scope>X-RAY CRYSTALLOGRAPHY (2.61 ANGSTROMS) OF 67-438</scope>
</reference>
<reference evidence="27" key="22">
    <citation type="journal article" date="2012" name="Nat. Struct. Mol. Biol.">
        <title>The Elongator subcomplex Elp456 is a hexameric RecA-like ATPase.</title>
        <authorList>
            <person name="Glatt S."/>
            <person name="Letoquart J."/>
            <person name="Faux C."/>
            <person name="Taylor N.M."/>
            <person name="Seraphin B."/>
            <person name="Muller C.W."/>
        </authorList>
    </citation>
    <scope>X-RAY CRYSTALLOGRAPHY (2.10 ANGSTROMS) OF 66-426</scope>
    <scope>SUBUNIT</scope>
</reference>
<reference key="23">
    <citation type="journal article" date="2017" name="EMBO Rep.">
        <title>Architecture of the yeast Elongator complex.</title>
        <authorList>
            <person name="Dauden M.I."/>
            <person name="Kosinski J."/>
            <person name="Kolaj-Robin O."/>
            <person name="Desfosses A."/>
            <person name="Ori A."/>
            <person name="Faux C."/>
            <person name="Hoffmann N.A."/>
            <person name="Onuma O.F."/>
            <person name="Breunig K.D."/>
            <person name="Beck M."/>
            <person name="Sachse C."/>
            <person name="Seraphin B."/>
            <person name="Glatt S."/>
            <person name="Mueller C.W."/>
        </authorList>
    </citation>
    <scope>STRUCTURE BY ELECTRON MICROSCOPY (3.3 ANGSTROMS)</scope>
    <scope>IDENTIFICATION IN THE ELONGATOR COMPLEX</scope>
</reference>
<reference key="24">
    <citation type="journal article" date="2017" name="EMBO Rep.">
        <title>Molecular architecture of the yeast Elongator complex reveals an unexpected asymmetric subunit arrangement.</title>
        <authorList>
            <person name="Setiaputra D.T."/>
            <person name="Cheng D.T."/>
            <person name="Lu S."/>
            <person name="Hansen J.M."/>
            <person name="Dalwadi U."/>
            <person name="Lam C.H."/>
            <person name="To J.L."/>
            <person name="Dong M.Q."/>
            <person name="Yip C.K."/>
        </authorList>
    </citation>
    <scope>STRUCTURE BY ELECTRON MICROSCOPY</scope>
    <scope>IDENTIFICATION IN THE ELONGATOR COMPLEX</scope>
</reference>
<evidence type="ECO:0000256" key="1">
    <source>
        <dbReference type="SAM" id="MobiDB-lite"/>
    </source>
</evidence>
<evidence type="ECO:0000269" key="2">
    <source>
    </source>
</evidence>
<evidence type="ECO:0000269" key="3">
    <source>
    </source>
</evidence>
<evidence type="ECO:0000269" key="4">
    <source>
    </source>
</evidence>
<evidence type="ECO:0000269" key="5">
    <source>
    </source>
</evidence>
<evidence type="ECO:0000269" key="6">
    <source>
    </source>
</evidence>
<evidence type="ECO:0000269" key="7">
    <source>
    </source>
</evidence>
<evidence type="ECO:0000269" key="8">
    <source>
    </source>
</evidence>
<evidence type="ECO:0000269" key="9">
    <source>
    </source>
</evidence>
<evidence type="ECO:0000269" key="10">
    <source>
    </source>
</evidence>
<evidence type="ECO:0000269" key="11">
    <source>
    </source>
</evidence>
<evidence type="ECO:0000269" key="12">
    <source>
    </source>
</evidence>
<evidence type="ECO:0000269" key="13">
    <source>
    </source>
</evidence>
<evidence type="ECO:0000269" key="14">
    <source>
    </source>
</evidence>
<evidence type="ECO:0000269" key="15">
    <source>
    </source>
</evidence>
<evidence type="ECO:0000269" key="16">
    <source>
    </source>
</evidence>
<evidence type="ECO:0000269" key="17">
    <source>
    </source>
</evidence>
<evidence type="ECO:0000303" key="18">
    <source>
    </source>
</evidence>
<evidence type="ECO:0000303" key="19">
    <source>
    </source>
</evidence>
<evidence type="ECO:0000303" key="20">
    <source>
    </source>
</evidence>
<evidence type="ECO:0000305" key="21"/>
<evidence type="ECO:0000305" key="22">
    <source>
    </source>
</evidence>
<evidence type="ECO:0000305" key="23">
    <source>
    </source>
</evidence>
<evidence type="ECO:0000305" key="24">
    <source>
    </source>
</evidence>
<evidence type="ECO:0000305" key="25">
    <source>
    </source>
</evidence>
<evidence type="ECO:0000305" key="26">
    <source>
    </source>
</evidence>
<evidence type="ECO:0007744" key="27">
    <source>
        <dbReference type="PDB" id="4A8J"/>
    </source>
</evidence>
<evidence type="ECO:0007744" key="28">
    <source>
        <dbReference type="PDB" id="4EJS"/>
    </source>
</evidence>
<evidence type="ECO:0007744" key="29">
    <source>
    </source>
</evidence>
<evidence type="ECO:0007829" key="30">
    <source>
        <dbReference type="PDB" id="4A8J"/>
    </source>
</evidence>
<evidence type="ECO:0007829" key="31">
    <source>
        <dbReference type="PDB" id="4EJS"/>
    </source>
</evidence>
<keyword id="KW-0002">3D-structure</keyword>
<keyword id="KW-0963">Cytoplasm</keyword>
<keyword id="KW-0488">Methylation</keyword>
<keyword id="KW-0539">Nucleus</keyword>
<keyword id="KW-0597">Phosphoprotein</keyword>
<keyword id="KW-1185">Reference proteome</keyword>
<keyword id="KW-0819">tRNA processing</keyword>
<sequence>MSFRKRGEILNDRGSGLRGPLLRGPPRTSSTPLRTGNRRAPGNVPLSDTTARLKKLNIADESKTKMGLDSSHVGVRPSPATSQPTTSTGSADLDSILGHMGLPLGNSVLVEEQSTTEFHSILGKLFAAQGIVHNRISDSSADKTRNGDTHVIVLSLNQMFAKELPGIYKGSRKQMKKNLISEEESKVTVQNLNETQRSTPSRYKDLKIAWKYKLADEKRLGSPDRDDIQQNSEYKDYNHQFDITTRLMPAPIASELTFIAPTQPVSTILSQIEQTIKRNDKKLIRIVIPSLLHPAMYPPKMFESSEIIGLMHGVRSLVKKYYERVVLFASISIDIITPPLLVLLRNMFDSVINLEPFNQEMTEFLERVYKSQPGKIQHGLVHILKLPVFTDRGEMRVLKSEWAFKNGRKKFEIEQWGIPVDDAEGSAASEQSHSHSHSDEISHNIPAKKTKISLDY</sequence>
<protein>
    <recommendedName>
        <fullName evidence="19">Elongator complex protein 4</fullName>
    </recommendedName>
    <alternativeName>
        <fullName evidence="18">Gamma-toxin target 7</fullName>
    </alternativeName>
    <alternativeName>
        <fullName>HAT-associated protein 1</fullName>
    </alternativeName>
</protein>